<name>ATPE_COXB1</name>
<dbReference type="EMBL" id="CP001020">
    <property type="protein sequence ID" value="ACJ19381.1"/>
    <property type="molecule type" value="Genomic_DNA"/>
</dbReference>
<dbReference type="RefSeq" id="WP_005770045.1">
    <property type="nucleotide sequence ID" value="NC_011528.1"/>
</dbReference>
<dbReference type="SMR" id="B6J964"/>
<dbReference type="KEGG" id="cbc:CbuK_0054"/>
<dbReference type="HOGENOM" id="CLU_084338_2_0_6"/>
<dbReference type="GO" id="GO:0005886">
    <property type="term" value="C:plasma membrane"/>
    <property type="evidence" value="ECO:0007669"/>
    <property type="project" value="UniProtKB-SubCell"/>
</dbReference>
<dbReference type="GO" id="GO:0045259">
    <property type="term" value="C:proton-transporting ATP synthase complex"/>
    <property type="evidence" value="ECO:0007669"/>
    <property type="project" value="UniProtKB-KW"/>
</dbReference>
<dbReference type="GO" id="GO:0005524">
    <property type="term" value="F:ATP binding"/>
    <property type="evidence" value="ECO:0007669"/>
    <property type="project" value="UniProtKB-UniRule"/>
</dbReference>
<dbReference type="GO" id="GO:0046933">
    <property type="term" value="F:proton-transporting ATP synthase activity, rotational mechanism"/>
    <property type="evidence" value="ECO:0007669"/>
    <property type="project" value="UniProtKB-UniRule"/>
</dbReference>
<dbReference type="CDD" id="cd12152">
    <property type="entry name" value="F1-ATPase_delta"/>
    <property type="match status" value="1"/>
</dbReference>
<dbReference type="FunFam" id="2.60.15.10:FF:000001">
    <property type="entry name" value="ATP synthase epsilon chain"/>
    <property type="match status" value="1"/>
</dbReference>
<dbReference type="Gene3D" id="1.20.5.440">
    <property type="entry name" value="ATP synthase delta/epsilon subunit, C-terminal domain"/>
    <property type="match status" value="1"/>
</dbReference>
<dbReference type="Gene3D" id="2.60.15.10">
    <property type="entry name" value="F0F1 ATP synthase delta/epsilon subunit, N-terminal"/>
    <property type="match status" value="1"/>
</dbReference>
<dbReference type="HAMAP" id="MF_00530">
    <property type="entry name" value="ATP_synth_epsil_bac"/>
    <property type="match status" value="1"/>
</dbReference>
<dbReference type="InterPro" id="IPR036794">
    <property type="entry name" value="ATP_F1_dsu/esu_C_sf"/>
</dbReference>
<dbReference type="InterPro" id="IPR001469">
    <property type="entry name" value="ATP_synth_F1_dsu/esu"/>
</dbReference>
<dbReference type="InterPro" id="IPR020546">
    <property type="entry name" value="ATP_synth_F1_dsu/esu_N"/>
</dbReference>
<dbReference type="InterPro" id="IPR020547">
    <property type="entry name" value="ATP_synth_F1_esu_C"/>
</dbReference>
<dbReference type="InterPro" id="IPR036771">
    <property type="entry name" value="ATPsynth_dsu/esu_N"/>
</dbReference>
<dbReference type="NCBIfam" id="TIGR01216">
    <property type="entry name" value="ATP_synt_epsi"/>
    <property type="match status" value="1"/>
</dbReference>
<dbReference type="NCBIfam" id="NF001847">
    <property type="entry name" value="PRK00571.1-4"/>
    <property type="match status" value="1"/>
</dbReference>
<dbReference type="PANTHER" id="PTHR13822">
    <property type="entry name" value="ATP SYNTHASE DELTA/EPSILON CHAIN"/>
    <property type="match status" value="1"/>
</dbReference>
<dbReference type="PANTHER" id="PTHR13822:SF10">
    <property type="entry name" value="ATP SYNTHASE EPSILON CHAIN, CHLOROPLASTIC"/>
    <property type="match status" value="1"/>
</dbReference>
<dbReference type="Pfam" id="PF00401">
    <property type="entry name" value="ATP-synt_DE"/>
    <property type="match status" value="1"/>
</dbReference>
<dbReference type="Pfam" id="PF02823">
    <property type="entry name" value="ATP-synt_DE_N"/>
    <property type="match status" value="1"/>
</dbReference>
<dbReference type="SUPFAM" id="SSF46604">
    <property type="entry name" value="Epsilon subunit of F1F0-ATP synthase C-terminal domain"/>
    <property type="match status" value="1"/>
</dbReference>
<dbReference type="SUPFAM" id="SSF51344">
    <property type="entry name" value="Epsilon subunit of F1F0-ATP synthase N-terminal domain"/>
    <property type="match status" value="1"/>
</dbReference>
<reference key="1">
    <citation type="journal article" date="2009" name="Infect. Immun.">
        <title>Comparative genomics reveal extensive transposon-mediated genomic plasticity and diversity among potential effector proteins within the genus Coxiella.</title>
        <authorList>
            <person name="Beare P.A."/>
            <person name="Unsworth N."/>
            <person name="Andoh M."/>
            <person name="Voth D.E."/>
            <person name="Omsland A."/>
            <person name="Gilk S.D."/>
            <person name="Williams K.P."/>
            <person name="Sobral B.W."/>
            <person name="Kupko J.J. III"/>
            <person name="Porcella S.F."/>
            <person name="Samuel J.E."/>
            <person name="Heinzen R.A."/>
        </authorList>
    </citation>
    <scope>NUCLEOTIDE SEQUENCE [LARGE SCALE GENOMIC DNA]</scope>
    <source>
        <strain>CbuK_Q154</strain>
    </source>
</reference>
<keyword id="KW-0066">ATP synthesis</keyword>
<keyword id="KW-0997">Cell inner membrane</keyword>
<keyword id="KW-1003">Cell membrane</keyword>
<keyword id="KW-0139">CF(1)</keyword>
<keyword id="KW-0375">Hydrogen ion transport</keyword>
<keyword id="KW-0406">Ion transport</keyword>
<keyword id="KW-0472">Membrane</keyword>
<keyword id="KW-0813">Transport</keyword>
<organism>
    <name type="scientific">Coxiella burnetii (strain CbuK_Q154)</name>
    <name type="common">Coxiella burnetii (strain Q154)</name>
    <dbReference type="NCBI Taxonomy" id="434924"/>
    <lineage>
        <taxon>Bacteria</taxon>
        <taxon>Pseudomonadati</taxon>
        <taxon>Pseudomonadota</taxon>
        <taxon>Gammaproteobacteria</taxon>
        <taxon>Legionellales</taxon>
        <taxon>Coxiellaceae</taxon>
        <taxon>Coxiella</taxon>
    </lineage>
</organism>
<sequence length="142" mass="15287">MAKTMQLEIVSAEAAIFSGKVEMIVVTGGMGELGIYPGHRQLLTSLKPGQIKAILEGGKEEVFYMSGGMLEVQPEIVTILADTALRAVDLDEAAAISAKEEAERRLAKQKAGIEYSKAMTELAEAAAQLRAIQMLRKSAKKH</sequence>
<protein>
    <recommendedName>
        <fullName evidence="1">ATP synthase epsilon chain</fullName>
    </recommendedName>
    <alternativeName>
        <fullName evidence="1">ATP synthase F1 sector epsilon subunit</fullName>
    </alternativeName>
    <alternativeName>
        <fullName evidence="1">F-ATPase epsilon subunit</fullName>
    </alternativeName>
</protein>
<accession>B6J964</accession>
<proteinExistence type="inferred from homology"/>
<feature type="chain" id="PRO_1000127842" description="ATP synthase epsilon chain">
    <location>
        <begin position="1"/>
        <end position="142"/>
    </location>
</feature>
<evidence type="ECO:0000255" key="1">
    <source>
        <dbReference type="HAMAP-Rule" id="MF_00530"/>
    </source>
</evidence>
<comment type="function">
    <text evidence="1">Produces ATP from ADP in the presence of a proton gradient across the membrane.</text>
</comment>
<comment type="subunit">
    <text evidence="1">F-type ATPases have 2 components, CF(1) - the catalytic core - and CF(0) - the membrane proton channel. CF(1) has five subunits: alpha(3), beta(3), gamma(1), delta(1), epsilon(1). CF(0) has three main subunits: a, b and c.</text>
</comment>
<comment type="subcellular location">
    <subcellularLocation>
        <location evidence="1">Cell inner membrane</location>
        <topology evidence="1">Peripheral membrane protein</topology>
    </subcellularLocation>
</comment>
<comment type="similarity">
    <text evidence="1">Belongs to the ATPase epsilon chain family.</text>
</comment>
<gene>
    <name evidence="1" type="primary">atpC</name>
    <name type="ordered locus">CbuK_0054</name>
</gene>